<feature type="signal peptide" evidence="2">
    <location>
        <begin position="1"/>
        <end position="21"/>
    </location>
</feature>
<feature type="chain" id="PRO_0000223345" description="Dual oxidase 1">
    <location>
        <begin position="22"/>
        <end position="1553"/>
    </location>
</feature>
<feature type="topological domain" description="Extracellular" evidence="2">
    <location>
        <begin position="22"/>
        <end position="596"/>
    </location>
</feature>
<feature type="transmembrane region" description="Helical" evidence="2">
    <location>
        <begin position="597"/>
        <end position="617"/>
    </location>
</feature>
<feature type="topological domain" description="Cytoplasmic" evidence="2">
    <location>
        <begin position="618"/>
        <end position="1046"/>
    </location>
</feature>
<feature type="transmembrane region" description="Helical" evidence="2">
    <location>
        <begin position="1047"/>
        <end position="1067"/>
    </location>
</feature>
<feature type="topological domain" description="Extracellular" evidence="2">
    <location>
        <begin position="1068"/>
        <end position="1082"/>
    </location>
</feature>
<feature type="transmembrane region" description="Helical" evidence="2">
    <location>
        <begin position="1083"/>
        <end position="1103"/>
    </location>
</feature>
<feature type="topological domain" description="Cytoplasmic" evidence="2">
    <location>
        <begin position="1104"/>
        <end position="1138"/>
    </location>
</feature>
<feature type="transmembrane region" description="Helical" evidence="2">
    <location>
        <begin position="1139"/>
        <end position="1159"/>
    </location>
</feature>
<feature type="topological domain" description="Extracellular" evidence="2">
    <location>
        <begin position="1160"/>
        <end position="1190"/>
    </location>
</feature>
<feature type="transmembrane region" description="Helical" evidence="2">
    <location>
        <begin position="1191"/>
        <end position="1211"/>
    </location>
</feature>
<feature type="topological domain" description="Cytoplasmic" evidence="2">
    <location>
        <begin position="1212"/>
        <end position="1228"/>
    </location>
</feature>
<feature type="transmembrane region" description="Helical" evidence="2">
    <location>
        <begin position="1229"/>
        <end position="1249"/>
    </location>
</feature>
<feature type="topological domain" description="Extracellular" evidence="2">
    <location>
        <position position="1250"/>
    </location>
</feature>
<feature type="transmembrane region" description="Helical" evidence="2">
    <location>
        <begin position="1251"/>
        <end position="1271"/>
    </location>
</feature>
<feature type="topological domain" description="Cytoplasmic" evidence="2">
    <location>
        <begin position="1272"/>
        <end position="1553"/>
    </location>
</feature>
<feature type="domain" description="EF-hand 1" evidence="3">
    <location>
        <begin position="815"/>
        <end position="850"/>
    </location>
</feature>
<feature type="domain" description="EF-hand 2" evidence="3">
    <location>
        <begin position="851"/>
        <end position="886"/>
    </location>
</feature>
<feature type="domain" description="EF-hand 3" evidence="3">
    <location>
        <begin position="895"/>
        <end position="930"/>
    </location>
</feature>
<feature type="domain" description="Ferric oxidoreductase">
    <location>
        <begin position="1089"/>
        <end position="1271"/>
    </location>
</feature>
<feature type="domain" description="FAD-binding FR-type" evidence="4">
    <location>
        <begin position="1272"/>
        <end position="1378"/>
    </location>
</feature>
<feature type="region of interest" description="Peroxidase-like; mediates peroxidase activity" evidence="1">
    <location>
        <begin position="26"/>
        <end position="593"/>
    </location>
</feature>
<feature type="region of interest" description="Interaction with TXNDC11" evidence="1">
    <location>
        <begin position="956"/>
        <end position="1250"/>
    </location>
</feature>
<feature type="binding site" evidence="3">
    <location>
        <position position="828"/>
    </location>
    <ligand>
        <name>Ca(2+)</name>
        <dbReference type="ChEBI" id="CHEBI:29108"/>
        <label>1</label>
    </ligand>
</feature>
<feature type="binding site" evidence="3">
    <location>
        <position position="830"/>
    </location>
    <ligand>
        <name>Ca(2+)</name>
        <dbReference type="ChEBI" id="CHEBI:29108"/>
        <label>1</label>
    </ligand>
</feature>
<feature type="binding site" evidence="3">
    <location>
        <position position="832"/>
    </location>
    <ligand>
        <name>Ca(2+)</name>
        <dbReference type="ChEBI" id="CHEBI:29108"/>
        <label>1</label>
    </ligand>
</feature>
<feature type="binding site" evidence="3">
    <location>
        <position position="834"/>
    </location>
    <ligand>
        <name>Ca(2+)</name>
        <dbReference type="ChEBI" id="CHEBI:29108"/>
        <label>1</label>
    </ligand>
</feature>
<feature type="binding site" evidence="3">
    <location>
        <position position="839"/>
    </location>
    <ligand>
        <name>Ca(2+)</name>
        <dbReference type="ChEBI" id="CHEBI:29108"/>
        <label>1</label>
    </ligand>
</feature>
<feature type="binding site" evidence="3">
    <location>
        <position position="864"/>
    </location>
    <ligand>
        <name>Ca(2+)</name>
        <dbReference type="ChEBI" id="CHEBI:29108"/>
        <label>2</label>
    </ligand>
</feature>
<feature type="binding site" evidence="3">
    <location>
        <position position="866"/>
    </location>
    <ligand>
        <name>Ca(2+)</name>
        <dbReference type="ChEBI" id="CHEBI:29108"/>
        <label>2</label>
    </ligand>
</feature>
<feature type="binding site" evidence="3">
    <location>
        <position position="868"/>
    </location>
    <ligand>
        <name>Ca(2+)</name>
        <dbReference type="ChEBI" id="CHEBI:29108"/>
        <label>2</label>
    </ligand>
</feature>
<feature type="binding site" evidence="3">
    <location>
        <position position="875"/>
    </location>
    <ligand>
        <name>Ca(2+)</name>
        <dbReference type="ChEBI" id="CHEBI:29108"/>
        <label>2</label>
    </ligand>
</feature>
<feature type="glycosylation site" description="N-linked (GlcNAc...) asparagine" evidence="2">
    <location>
        <position position="94"/>
    </location>
</feature>
<feature type="glycosylation site" description="N-linked (GlcNAc...) asparagine" evidence="2">
    <location>
        <position position="342"/>
    </location>
</feature>
<feature type="glycosylation site" description="N-linked (GlcNAc...) asparagine" evidence="2">
    <location>
        <position position="354"/>
    </location>
</feature>
<feature type="glycosylation site" description="N-linked (GlcNAc...) asparagine" evidence="2">
    <location>
        <position position="534"/>
    </location>
</feature>
<dbReference type="EC" id="1.11.1.-"/>
<dbReference type="EC" id="1.6.3.1"/>
<dbReference type="EMBL" id="AF547266">
    <property type="protein sequence ID" value="AAN39338.1"/>
    <property type="molecule type" value="mRNA"/>
</dbReference>
<dbReference type="RefSeq" id="NP_999261.1">
    <property type="nucleotide sequence ID" value="NM_214096.2"/>
</dbReference>
<dbReference type="SMR" id="Q8HZK3"/>
<dbReference type="FunCoup" id="Q8HZK3">
    <property type="interactions" value="196"/>
</dbReference>
<dbReference type="STRING" id="9823.ENSSSCP00000030326"/>
<dbReference type="PeroxiBase" id="3348">
    <property type="entry name" value="SscDuOx01"/>
</dbReference>
<dbReference type="GlyCosmos" id="Q8HZK3">
    <property type="glycosylation" value="4 sites, No reported glycans"/>
</dbReference>
<dbReference type="GlyGen" id="Q8HZK3">
    <property type="glycosylation" value="4 sites"/>
</dbReference>
<dbReference type="PaxDb" id="9823-ENSSSCP00000005035"/>
<dbReference type="Ensembl" id="ENSSSCT00015061098.1">
    <property type="protein sequence ID" value="ENSSSCP00015024547.1"/>
    <property type="gene ID" value="ENSSSCG00015044714.1"/>
</dbReference>
<dbReference type="Ensembl" id="ENSSSCT00015061238.1">
    <property type="protein sequence ID" value="ENSSSCP00015024609.1"/>
    <property type="gene ID" value="ENSSSCG00015044714.1"/>
</dbReference>
<dbReference type="Ensembl" id="ENSSSCT00030100495.1">
    <property type="protein sequence ID" value="ENSSSCP00030046333.1"/>
    <property type="gene ID" value="ENSSSCG00030071685.1"/>
</dbReference>
<dbReference type="Ensembl" id="ENSSSCT00035042519.1">
    <property type="protein sequence ID" value="ENSSSCP00035017004.1"/>
    <property type="gene ID" value="ENSSSCG00035032081.1"/>
</dbReference>
<dbReference type="Ensembl" id="ENSSSCT00040084544.1">
    <property type="protein sequence ID" value="ENSSSCP00040036891.1"/>
    <property type="gene ID" value="ENSSSCG00040061821.1"/>
</dbReference>
<dbReference type="Ensembl" id="ENSSSCT00045002873.1">
    <property type="protein sequence ID" value="ENSSSCP00045001810.1"/>
    <property type="gene ID" value="ENSSSCG00045001783.1"/>
</dbReference>
<dbReference type="Ensembl" id="ENSSSCT00050107780.1">
    <property type="protein sequence ID" value="ENSSSCP00050047723.1"/>
    <property type="gene ID" value="ENSSSCG00050078157.1"/>
</dbReference>
<dbReference type="Ensembl" id="ENSSSCT00055024871.1">
    <property type="protein sequence ID" value="ENSSSCP00055019747.1"/>
    <property type="gene ID" value="ENSSSCG00055012477.1"/>
</dbReference>
<dbReference type="Ensembl" id="ENSSSCT00060054640.1">
    <property type="protein sequence ID" value="ENSSSCP00060023303.1"/>
    <property type="gene ID" value="ENSSSCG00060040313.1"/>
</dbReference>
<dbReference type="Ensembl" id="ENSSSCT00090054553">
    <property type="protein sequence ID" value="ENSSSCP00090033917"/>
    <property type="gene ID" value="ENSSSCG00090030780"/>
</dbReference>
<dbReference type="Ensembl" id="ENSSSCT00105072644">
    <property type="protein sequence ID" value="ENSSSCP00105051573"/>
    <property type="gene ID" value="ENSSSCG00105037992"/>
</dbReference>
<dbReference type="Ensembl" id="ENSSSCT00110004793">
    <property type="protein sequence ID" value="ENSSSCP00110003585"/>
    <property type="gene ID" value="ENSSSCG00110002357"/>
</dbReference>
<dbReference type="Ensembl" id="ENSSSCT00115010987">
    <property type="protein sequence ID" value="ENSSSCP00115010349"/>
    <property type="gene ID" value="ENSSSCG00115006315"/>
</dbReference>
<dbReference type="Ensembl" id="ENSSSCT00130064393">
    <property type="protein sequence ID" value="ENSSSCP00130046191"/>
    <property type="gene ID" value="ENSSSCG00130032928"/>
</dbReference>
<dbReference type="GeneID" id="397177"/>
<dbReference type="KEGG" id="ssc:397177"/>
<dbReference type="CTD" id="53905"/>
<dbReference type="eggNOG" id="KOG0039">
    <property type="taxonomic scope" value="Eukaryota"/>
</dbReference>
<dbReference type="InParanoid" id="Q8HZK3"/>
<dbReference type="OrthoDB" id="6019201at2759"/>
<dbReference type="Reactome" id="R-SSC-209968">
    <property type="pathway name" value="Thyroxine biosynthesis"/>
</dbReference>
<dbReference type="UniPathway" id="UPA00194"/>
<dbReference type="Proteomes" id="UP000008227">
    <property type="component" value="Unplaced"/>
</dbReference>
<dbReference type="Proteomes" id="UP000314985">
    <property type="component" value="Unplaced"/>
</dbReference>
<dbReference type="Proteomes" id="UP000694570">
    <property type="component" value="Unplaced"/>
</dbReference>
<dbReference type="Proteomes" id="UP000694571">
    <property type="component" value="Unplaced"/>
</dbReference>
<dbReference type="Proteomes" id="UP000694720">
    <property type="component" value="Unplaced"/>
</dbReference>
<dbReference type="Proteomes" id="UP000694722">
    <property type="component" value="Unplaced"/>
</dbReference>
<dbReference type="Proteomes" id="UP000694723">
    <property type="component" value="Unplaced"/>
</dbReference>
<dbReference type="Proteomes" id="UP000694724">
    <property type="component" value="Unplaced"/>
</dbReference>
<dbReference type="Proteomes" id="UP000694725">
    <property type="component" value="Unplaced"/>
</dbReference>
<dbReference type="Proteomes" id="UP000694726">
    <property type="component" value="Unplaced"/>
</dbReference>
<dbReference type="Proteomes" id="UP000694727">
    <property type="component" value="Unplaced"/>
</dbReference>
<dbReference type="Proteomes" id="UP000694728">
    <property type="component" value="Unplaced"/>
</dbReference>
<dbReference type="GO" id="GO:0016324">
    <property type="term" value="C:apical plasma membrane"/>
    <property type="evidence" value="ECO:0007669"/>
    <property type="project" value="UniProtKB-SubCell"/>
</dbReference>
<dbReference type="GO" id="GO:0005783">
    <property type="term" value="C:endoplasmic reticulum"/>
    <property type="evidence" value="ECO:0000250"/>
    <property type="project" value="UniProtKB"/>
</dbReference>
<dbReference type="GO" id="GO:0043020">
    <property type="term" value="C:NADPH oxidase complex"/>
    <property type="evidence" value="ECO:0000318"/>
    <property type="project" value="GO_Central"/>
</dbReference>
<dbReference type="GO" id="GO:0005886">
    <property type="term" value="C:plasma membrane"/>
    <property type="evidence" value="ECO:0000250"/>
    <property type="project" value="UniProtKB"/>
</dbReference>
<dbReference type="GO" id="GO:0005509">
    <property type="term" value="F:calcium ion binding"/>
    <property type="evidence" value="ECO:0007669"/>
    <property type="project" value="InterPro"/>
</dbReference>
<dbReference type="GO" id="GO:0020037">
    <property type="term" value="F:heme binding"/>
    <property type="evidence" value="ECO:0007669"/>
    <property type="project" value="InterPro"/>
</dbReference>
<dbReference type="GO" id="GO:0106293">
    <property type="term" value="F:NADH oxidase H202-forming activity"/>
    <property type="evidence" value="ECO:0007669"/>
    <property type="project" value="RHEA"/>
</dbReference>
<dbReference type="GO" id="GO:0106294">
    <property type="term" value="F:NADPH oxidase H202-forming activity"/>
    <property type="evidence" value="ECO:0007669"/>
    <property type="project" value="RHEA"/>
</dbReference>
<dbReference type="GO" id="GO:0004601">
    <property type="term" value="F:peroxidase activity"/>
    <property type="evidence" value="ECO:0007669"/>
    <property type="project" value="UniProtKB-KW"/>
</dbReference>
<dbReference type="GO" id="GO:0016175">
    <property type="term" value="F:superoxide-generating NAD(P)H oxidase activity"/>
    <property type="evidence" value="ECO:0000318"/>
    <property type="project" value="GO_Central"/>
</dbReference>
<dbReference type="GO" id="GO:0042335">
    <property type="term" value="P:cuticle development"/>
    <property type="evidence" value="ECO:0000250"/>
    <property type="project" value="UniProtKB"/>
</dbReference>
<dbReference type="GO" id="GO:0019221">
    <property type="term" value="P:cytokine-mediated signaling pathway"/>
    <property type="evidence" value="ECO:0000250"/>
    <property type="project" value="UniProtKB"/>
</dbReference>
<dbReference type="GO" id="GO:0006952">
    <property type="term" value="P:defense response"/>
    <property type="evidence" value="ECO:0000318"/>
    <property type="project" value="GO_Central"/>
</dbReference>
<dbReference type="GO" id="GO:0042446">
    <property type="term" value="P:hormone biosynthetic process"/>
    <property type="evidence" value="ECO:0007669"/>
    <property type="project" value="UniProtKB-KW"/>
</dbReference>
<dbReference type="GO" id="GO:0042744">
    <property type="term" value="P:hydrogen peroxide catabolic process"/>
    <property type="evidence" value="ECO:0007669"/>
    <property type="project" value="UniProtKB-KW"/>
</dbReference>
<dbReference type="GO" id="GO:0051591">
    <property type="term" value="P:response to cAMP"/>
    <property type="evidence" value="ECO:0000250"/>
    <property type="project" value="UniProtKB"/>
</dbReference>
<dbReference type="GO" id="GO:0006979">
    <property type="term" value="P:response to oxidative stress"/>
    <property type="evidence" value="ECO:0007669"/>
    <property type="project" value="InterPro"/>
</dbReference>
<dbReference type="GO" id="GO:0042554">
    <property type="term" value="P:superoxide anion generation"/>
    <property type="evidence" value="ECO:0000318"/>
    <property type="project" value="GO_Central"/>
</dbReference>
<dbReference type="GO" id="GO:0006590">
    <property type="term" value="P:thyroid hormone generation"/>
    <property type="evidence" value="ECO:0007669"/>
    <property type="project" value="UniProtKB-UniPathway"/>
</dbReference>
<dbReference type="CDD" id="cd09820">
    <property type="entry name" value="dual_peroxidase_like"/>
    <property type="match status" value="1"/>
</dbReference>
<dbReference type="CDD" id="cd00051">
    <property type="entry name" value="EFh"/>
    <property type="match status" value="2"/>
</dbReference>
<dbReference type="CDD" id="cd06186">
    <property type="entry name" value="NOX_Duox_like_FAD_NADP"/>
    <property type="match status" value="1"/>
</dbReference>
<dbReference type="FunFam" id="2.40.30.10:FF:000043">
    <property type="entry name" value="dual oxidase 1"/>
    <property type="match status" value="1"/>
</dbReference>
<dbReference type="FunFam" id="1.10.640.10:FF:000004">
    <property type="entry name" value="Dual oxidase 2"/>
    <property type="match status" value="1"/>
</dbReference>
<dbReference type="FunFam" id="3.40.50.80:FF:000006">
    <property type="entry name" value="Dual oxidase 2"/>
    <property type="match status" value="1"/>
</dbReference>
<dbReference type="FunFam" id="1.10.238.10:FF:000095">
    <property type="entry name" value="dual oxidase 2"/>
    <property type="match status" value="1"/>
</dbReference>
<dbReference type="Gene3D" id="1.10.238.10">
    <property type="entry name" value="EF-hand"/>
    <property type="match status" value="1"/>
</dbReference>
<dbReference type="Gene3D" id="1.10.640.10">
    <property type="entry name" value="Haem peroxidase domain superfamily, animal type"/>
    <property type="match status" value="1"/>
</dbReference>
<dbReference type="Gene3D" id="3.40.50.80">
    <property type="entry name" value="Nucleotide-binding domain of ferredoxin-NADP reductase (FNR) module"/>
    <property type="match status" value="1"/>
</dbReference>
<dbReference type="Gene3D" id="2.40.30.10">
    <property type="entry name" value="Translation factors"/>
    <property type="match status" value="1"/>
</dbReference>
<dbReference type="InterPro" id="IPR034821">
    <property type="entry name" value="DUOX_peroxidase"/>
</dbReference>
<dbReference type="InterPro" id="IPR011992">
    <property type="entry name" value="EF-hand-dom_pair"/>
</dbReference>
<dbReference type="InterPro" id="IPR018247">
    <property type="entry name" value="EF_Hand_1_Ca_BS"/>
</dbReference>
<dbReference type="InterPro" id="IPR002048">
    <property type="entry name" value="EF_hand_dom"/>
</dbReference>
<dbReference type="InterPro" id="IPR013112">
    <property type="entry name" value="FAD-bd_8"/>
</dbReference>
<dbReference type="InterPro" id="IPR017927">
    <property type="entry name" value="FAD-bd_FR_type"/>
</dbReference>
<dbReference type="InterPro" id="IPR013130">
    <property type="entry name" value="Fe3_Rdtase_TM_dom"/>
</dbReference>
<dbReference type="InterPro" id="IPR013121">
    <property type="entry name" value="Fe_red_NAD-bd_6"/>
</dbReference>
<dbReference type="InterPro" id="IPR039261">
    <property type="entry name" value="FNR_nucleotide-bd"/>
</dbReference>
<dbReference type="InterPro" id="IPR019791">
    <property type="entry name" value="Haem_peroxidase_animal"/>
</dbReference>
<dbReference type="InterPro" id="IPR010255">
    <property type="entry name" value="Haem_peroxidase_sf"/>
</dbReference>
<dbReference type="InterPro" id="IPR037120">
    <property type="entry name" value="Haem_peroxidase_sf_animal"/>
</dbReference>
<dbReference type="InterPro" id="IPR050369">
    <property type="entry name" value="RBOH/FRE"/>
</dbReference>
<dbReference type="InterPro" id="IPR017938">
    <property type="entry name" value="Riboflavin_synthase-like_b-brl"/>
</dbReference>
<dbReference type="PANTHER" id="PTHR11972:SF75">
    <property type="entry name" value="DUAL OXIDASE 1"/>
    <property type="match status" value="1"/>
</dbReference>
<dbReference type="PANTHER" id="PTHR11972">
    <property type="entry name" value="NADPH OXIDASE"/>
    <property type="match status" value="1"/>
</dbReference>
<dbReference type="Pfam" id="PF03098">
    <property type="entry name" value="An_peroxidase"/>
    <property type="match status" value="1"/>
</dbReference>
<dbReference type="Pfam" id="PF00036">
    <property type="entry name" value="EF-hand_1"/>
    <property type="match status" value="1"/>
</dbReference>
<dbReference type="Pfam" id="PF13499">
    <property type="entry name" value="EF-hand_7"/>
    <property type="match status" value="1"/>
</dbReference>
<dbReference type="Pfam" id="PF08022">
    <property type="entry name" value="FAD_binding_8"/>
    <property type="match status" value="1"/>
</dbReference>
<dbReference type="Pfam" id="PF01794">
    <property type="entry name" value="Ferric_reduct"/>
    <property type="match status" value="1"/>
</dbReference>
<dbReference type="Pfam" id="PF08030">
    <property type="entry name" value="NAD_binding_6"/>
    <property type="match status" value="1"/>
</dbReference>
<dbReference type="PRINTS" id="PR00457">
    <property type="entry name" value="ANPEROXIDASE"/>
</dbReference>
<dbReference type="SFLD" id="SFLDS00052">
    <property type="entry name" value="Ferric_Reductase_Domain"/>
    <property type="match status" value="1"/>
</dbReference>
<dbReference type="SFLD" id="SFLDG01168">
    <property type="entry name" value="Ferric_reductase_subgroup_(FRE"/>
    <property type="match status" value="1"/>
</dbReference>
<dbReference type="SFLD" id="SFLDG01169">
    <property type="entry name" value="NADPH_oxidase_subgroup_(NOX)"/>
    <property type="match status" value="1"/>
</dbReference>
<dbReference type="SMART" id="SM00054">
    <property type="entry name" value="EFh"/>
    <property type="match status" value="2"/>
</dbReference>
<dbReference type="SUPFAM" id="SSF47473">
    <property type="entry name" value="EF-hand"/>
    <property type="match status" value="1"/>
</dbReference>
<dbReference type="SUPFAM" id="SSF52343">
    <property type="entry name" value="Ferredoxin reductase-like, C-terminal NADP-linked domain"/>
    <property type="match status" value="1"/>
</dbReference>
<dbReference type="SUPFAM" id="SSF48113">
    <property type="entry name" value="Heme-dependent peroxidases"/>
    <property type="match status" value="1"/>
</dbReference>
<dbReference type="SUPFAM" id="SSF63380">
    <property type="entry name" value="Riboflavin synthase domain-like"/>
    <property type="match status" value="1"/>
</dbReference>
<dbReference type="PROSITE" id="PS00018">
    <property type="entry name" value="EF_HAND_1"/>
    <property type="match status" value="2"/>
</dbReference>
<dbReference type="PROSITE" id="PS50222">
    <property type="entry name" value="EF_HAND_2"/>
    <property type="match status" value="3"/>
</dbReference>
<dbReference type="PROSITE" id="PS51384">
    <property type="entry name" value="FAD_FR"/>
    <property type="match status" value="1"/>
</dbReference>
<dbReference type="PROSITE" id="PS50292">
    <property type="entry name" value="PEROXIDASE_3"/>
    <property type="match status" value="1"/>
</dbReference>
<comment type="function">
    <text>Generates hydrogen peroxide which is required for the activity of thyroid peroxidase/TPO and lactoperoxidase/LPO. Plays a role in thyroid hormones synthesis and lactoperoxidase-mediated antimicrobial defense at the surface of mucosa. May have its own peroxidase activity through its N-terminal peroxidase-like domain.</text>
</comment>
<comment type="catalytic activity">
    <reaction>
        <text>NADH + O2 + H(+) = H2O2 + NAD(+)</text>
        <dbReference type="Rhea" id="RHEA:11264"/>
        <dbReference type="ChEBI" id="CHEBI:15378"/>
        <dbReference type="ChEBI" id="CHEBI:15379"/>
        <dbReference type="ChEBI" id="CHEBI:16240"/>
        <dbReference type="ChEBI" id="CHEBI:57540"/>
        <dbReference type="ChEBI" id="CHEBI:57945"/>
        <dbReference type="EC" id="1.6.3.1"/>
    </reaction>
</comment>
<comment type="catalytic activity">
    <reaction>
        <text>NADPH + O2 + H(+) = H2O2 + NADP(+)</text>
        <dbReference type="Rhea" id="RHEA:11260"/>
        <dbReference type="ChEBI" id="CHEBI:15378"/>
        <dbReference type="ChEBI" id="CHEBI:15379"/>
        <dbReference type="ChEBI" id="CHEBI:16240"/>
        <dbReference type="ChEBI" id="CHEBI:57783"/>
        <dbReference type="ChEBI" id="CHEBI:58349"/>
        <dbReference type="EC" id="1.6.3.1"/>
    </reaction>
</comment>
<comment type="activity regulation">
    <text evidence="1">The NADPH oxidase activity is calcium-dependent. Peroxidase activity is inhibited by aminobenzohydrazide (By similarity).</text>
</comment>
<comment type="pathway">
    <text>Hormone biosynthesis; thyroid hormone biosynthesis.</text>
</comment>
<comment type="subunit">
    <text evidence="1">Interacts with TXNDC11, TPO and CYBA.</text>
</comment>
<comment type="subcellular location">
    <subcellularLocation>
        <location evidence="1">Apical cell membrane</location>
        <topology evidence="1">Multi-pass membrane protein</topology>
    </subcellularLocation>
    <text evidence="1">Localizes to the apical membrane of epithelial cells.</text>
</comment>
<comment type="tissue specificity">
    <text evidence="5">Specifically expressed in thyroid.</text>
</comment>
<comment type="PTM">
    <text evidence="1">N-glycosylated.</text>
</comment>
<comment type="similarity">
    <text evidence="6">In the N-terminal section; belongs to the peroxidase family.</text>
</comment>
<proteinExistence type="evidence at transcript level"/>
<accession>Q8HZK3</accession>
<evidence type="ECO:0000250" key="1"/>
<evidence type="ECO:0000255" key="2"/>
<evidence type="ECO:0000255" key="3">
    <source>
        <dbReference type="PROSITE-ProRule" id="PRU00448"/>
    </source>
</evidence>
<evidence type="ECO:0000255" key="4">
    <source>
        <dbReference type="PROSITE-ProRule" id="PRU00716"/>
    </source>
</evidence>
<evidence type="ECO:0000269" key="5">
    <source>
    </source>
</evidence>
<evidence type="ECO:0000305" key="6"/>
<gene>
    <name type="primary">DUOX1</name>
</gene>
<reference key="1">
    <citation type="journal article" date="2003" name="Endocrinology">
        <title>Effect of iodide on nicotinamide adenine dinucleotide phosphate oxidase activity and Duox2 protein expression in isolated porcine thyroid follicles.</title>
        <authorList>
            <person name="Morand S."/>
            <person name="Chaaraoui M."/>
            <person name="Kaniewski J."/>
            <person name="Deme D."/>
            <person name="Ohayon R."/>
            <person name="Noel-Hudson M.-S."/>
            <person name="Virion A."/>
            <person name="Dupuy C."/>
        </authorList>
    </citation>
    <scope>NUCLEOTIDE SEQUENCE [MRNA]</scope>
    <source>
        <tissue>Thyroid</tissue>
    </source>
</reference>
<reference key="2">
    <citation type="journal article" date="2005" name="Am. J. Physiol.">
        <title>Dual oxidase2 is expressed all along the digestive tract.</title>
        <authorList>
            <person name="Ameziane-El-Hassani R."/>
            <person name="Benfares N."/>
            <person name="Caillou B."/>
            <person name="Talbot M."/>
            <person name="Sabourin J.-C."/>
            <person name="Belotte V."/>
            <person name="Morand S."/>
            <person name="Gnidehou S."/>
            <person name="Agnandji D."/>
            <person name="Ohayon R."/>
            <person name="Kaniewski J."/>
            <person name="Noel-Hudson M.-S."/>
            <person name="Bidart J.-M."/>
            <person name="Schlumberger M."/>
            <person name="Virion A."/>
            <person name="Dupuy C."/>
        </authorList>
    </citation>
    <scope>TISSUE SPECIFICITY</scope>
</reference>
<name>DUOX1_PIG</name>
<protein>
    <recommendedName>
        <fullName>Dual oxidase 1</fullName>
        <ecNumber>1.11.1.-</ecNumber>
        <ecNumber>1.6.3.1</ecNumber>
    </recommendedName>
</protein>
<keyword id="KW-0106">Calcium</keyword>
<keyword id="KW-1003">Cell membrane</keyword>
<keyword id="KW-0274">FAD</keyword>
<keyword id="KW-0285">Flavoprotein</keyword>
<keyword id="KW-0325">Glycoprotein</keyword>
<keyword id="KW-0376">Hydrogen peroxide</keyword>
<keyword id="KW-0472">Membrane</keyword>
<keyword id="KW-0479">Metal-binding</keyword>
<keyword id="KW-0521">NADP</keyword>
<keyword id="KW-0560">Oxidoreductase</keyword>
<keyword id="KW-0575">Peroxidase</keyword>
<keyword id="KW-1185">Reference proteome</keyword>
<keyword id="KW-0677">Repeat</keyword>
<keyword id="KW-0732">Signal</keyword>
<keyword id="KW-0893">Thyroid hormones biosynthesis</keyword>
<keyword id="KW-0812">Transmembrane</keyword>
<keyword id="KW-1133">Transmembrane helix</keyword>
<sequence>MGFRLALAWTLLVGPWMPMGARNSISWEVQRFDGWYNNLMEHKWGSKGSRLQRLVPASYADGVYQPLGEPHLPNPRDLSNTAMRGPAGQASLRNRTVLGVFFGYHVLSDLVSIEKPGCPAEFLNIHIPPGDPVFDPHKSGDVVLPFQRSRWDPNTGQSPSNPRDLTNEVTGWLDGSAIYGSSHSWSDELRSFSGGQLASGPDPAFPRQAQDPLFMWTPPDPATGQRGPQGLYAFGAEQGNREPFLQALGLLWFRYHNLCAQKLAREHPLWGDEELFQHARKRVIATYQSITMYEWLPSFLRKMPQEYTGYRPFLDPSISPEFLAASEQFFSTMVPPGVYMRNASCHFQGVINRNSSVSRALRVCNSYWSREHPNLQRAEDVDALLLGMASQIAEREDHMVVEDVQDFWPGPLKFSRTDHLASCLQRGRDLGLPSYTKARARLGLPPVTRWQDINPALSRSDGIVLEATAALYNQDLSRLELLPGGLLESYGDPGPLFSTIVLDQFVRLRDGDRYWFENTKNGLFSEKEIAEIRNTSLRDVLVAVTNMTPGALQPNVFFWHAGDPCPQPRQLSTKDLPACAPLIMRDYFKGSGFGFGVTIGTLCCFPLVSLLSAWIVAQLRRRNFKRLQVQNRQSIMCEKLVGGMKALEWQGRKEPCRPVLVHLQSGQIHVMDGRLSVLRTIQLRPPQQVNLILSSNHGRRTLLLKIPKEYDLVLMFDLEEERQVMVENLQSALKESGLSFQEWELREQELMRAAVTREQRSHLLETFFRHLFSQVLDIDQADAGALPLDSSQKVREALTCELSRAEFAESLGLKPQDMFVESMFSLADKDGNGYLSFREFLDILVVFMKGSPEEKSRLMFRMYDFDGNGLISKDEFIRMLRSFIEISNNCLSKAQLTEVVESMFREAGFQDKQELTWEDFHFMLRDHDSELRFTQLCVKGVEVPEVIKDLCRRASYISQEKLCPSPRVSAHCPRSNVDVEVELTPWKLQCPTDTDPPQEIRRRFGKKVTSFQPLLFTEAHREKFQRSRRHQTVQQFKRFVENYRRHIGCLAVFYTIAGGLFLERAYYYAFAAHHMGITDTTRVGIILSRGTAASISFMFSYILLTMCRNLITFLRETFLNRYVPFDAAVDFHRLIASTAIILTVLHSAGHVVNVYLFSISPLSVLSCLFPGLFHDNGSEFPQKYYWWFFQTVPGLTGVMLLLILAIMYVFASHHFRRCSFRGFWLTHHLYILLYMLLIIHGSFALIQLPRFHIFFLVPALIYVGDKLVSLSRKKVEISVVKAELLPSGVTHLQFQRPQGFEYKSGQWVRIACLALGTTEYHPFTLTSAPHEDTLSLHIRAAGPWTTRLREIYSPPTDDNCAKYPKLYLDGPFGEGHQEWHKFEVSVLVGGGIGVTPFASILKDLVFKSSVSCQVFCKKIYFIWVTRTQRQFEWLADIIREVEENDHRDLVSVHIYITQLAEKFDLRTTMLYICERHFQKVLNRSLFTGLRSITHFGRPPFEPFFNSLQEVHPQVRKIGVFSCGPPGMTKNVEKACQLINRQDRTHFSHHYENF</sequence>
<organism>
    <name type="scientific">Sus scrofa</name>
    <name type="common">Pig</name>
    <dbReference type="NCBI Taxonomy" id="9823"/>
    <lineage>
        <taxon>Eukaryota</taxon>
        <taxon>Metazoa</taxon>
        <taxon>Chordata</taxon>
        <taxon>Craniata</taxon>
        <taxon>Vertebrata</taxon>
        <taxon>Euteleostomi</taxon>
        <taxon>Mammalia</taxon>
        <taxon>Eutheria</taxon>
        <taxon>Laurasiatheria</taxon>
        <taxon>Artiodactyla</taxon>
        <taxon>Suina</taxon>
        <taxon>Suidae</taxon>
        <taxon>Sus</taxon>
    </lineage>
</organism>